<evidence type="ECO:0000255" key="1">
    <source>
        <dbReference type="HAMAP-Rule" id="MF_01646"/>
    </source>
</evidence>
<keyword id="KW-0169">Cobalamin biosynthesis</keyword>
<keyword id="KW-0456">Lyase</keyword>
<keyword id="KW-0489">Methyltransferase</keyword>
<keyword id="KW-0511">Multifunctional enzyme</keyword>
<keyword id="KW-0520">NAD</keyword>
<keyword id="KW-0560">Oxidoreductase</keyword>
<keyword id="KW-0597">Phosphoprotein</keyword>
<keyword id="KW-0627">Porphyrin biosynthesis</keyword>
<keyword id="KW-0949">S-adenosyl-L-methionine</keyword>
<keyword id="KW-0808">Transferase</keyword>
<reference key="1">
    <citation type="journal article" date="2005" name="Nucleic Acids Res.">
        <title>Genome dynamics and diversity of Shigella species, the etiologic agents of bacillary dysentery.</title>
        <authorList>
            <person name="Yang F."/>
            <person name="Yang J."/>
            <person name="Zhang X."/>
            <person name="Chen L."/>
            <person name="Jiang Y."/>
            <person name="Yan Y."/>
            <person name="Tang X."/>
            <person name="Wang J."/>
            <person name="Xiong Z."/>
            <person name="Dong J."/>
            <person name="Xue Y."/>
            <person name="Zhu Y."/>
            <person name="Xu X."/>
            <person name="Sun L."/>
            <person name="Chen S."/>
            <person name="Nie H."/>
            <person name="Peng J."/>
            <person name="Xu J."/>
            <person name="Wang Y."/>
            <person name="Yuan Z."/>
            <person name="Wen Y."/>
            <person name="Yao Z."/>
            <person name="Shen Y."/>
            <person name="Qiang B."/>
            <person name="Hou Y."/>
            <person name="Yu J."/>
            <person name="Jin Q."/>
        </authorList>
    </citation>
    <scope>NUCLEOTIDE SEQUENCE [LARGE SCALE GENOMIC DNA]</scope>
    <source>
        <strain>Sb227</strain>
    </source>
</reference>
<name>CYSG_SHIBS</name>
<accession>Q31VS0</accession>
<comment type="function">
    <text evidence="1">Multifunctional enzyme that catalyzes the SAM-dependent methylations of uroporphyrinogen III at position C-2 and C-7 to form precorrin-2 via precorrin-1. Then it catalyzes the NAD-dependent ring dehydrogenation of precorrin-2 to yield sirohydrochlorin. Finally, it catalyzes the ferrochelation of sirohydrochlorin to yield siroheme.</text>
</comment>
<comment type="catalytic activity">
    <reaction evidence="1">
        <text>uroporphyrinogen III + 2 S-adenosyl-L-methionine = precorrin-2 + 2 S-adenosyl-L-homocysteine + H(+)</text>
        <dbReference type="Rhea" id="RHEA:32459"/>
        <dbReference type="ChEBI" id="CHEBI:15378"/>
        <dbReference type="ChEBI" id="CHEBI:57308"/>
        <dbReference type="ChEBI" id="CHEBI:57856"/>
        <dbReference type="ChEBI" id="CHEBI:58827"/>
        <dbReference type="ChEBI" id="CHEBI:59789"/>
        <dbReference type="EC" id="2.1.1.107"/>
    </reaction>
</comment>
<comment type="catalytic activity">
    <reaction evidence="1">
        <text>precorrin-2 + NAD(+) = sirohydrochlorin + NADH + 2 H(+)</text>
        <dbReference type="Rhea" id="RHEA:15613"/>
        <dbReference type="ChEBI" id="CHEBI:15378"/>
        <dbReference type="ChEBI" id="CHEBI:57540"/>
        <dbReference type="ChEBI" id="CHEBI:57945"/>
        <dbReference type="ChEBI" id="CHEBI:58351"/>
        <dbReference type="ChEBI" id="CHEBI:58827"/>
        <dbReference type="EC" id="1.3.1.76"/>
    </reaction>
</comment>
<comment type="catalytic activity">
    <reaction evidence="1">
        <text>siroheme + 2 H(+) = sirohydrochlorin + Fe(2+)</text>
        <dbReference type="Rhea" id="RHEA:24360"/>
        <dbReference type="ChEBI" id="CHEBI:15378"/>
        <dbReference type="ChEBI" id="CHEBI:29033"/>
        <dbReference type="ChEBI" id="CHEBI:58351"/>
        <dbReference type="ChEBI" id="CHEBI:60052"/>
        <dbReference type="EC" id="4.99.1.4"/>
    </reaction>
</comment>
<comment type="pathway">
    <text evidence="1">Cofactor biosynthesis; adenosylcobalamin biosynthesis; precorrin-2 from uroporphyrinogen III: step 1/1.</text>
</comment>
<comment type="pathway">
    <text evidence="1">Cofactor biosynthesis; adenosylcobalamin biosynthesis; sirohydrochlorin from precorrin-2: step 1/1.</text>
</comment>
<comment type="pathway">
    <text evidence="1">Porphyrin-containing compound metabolism; siroheme biosynthesis; precorrin-2 from uroporphyrinogen III: step 1/1.</text>
</comment>
<comment type="pathway">
    <text evidence="1">Porphyrin-containing compound metabolism; siroheme biosynthesis; siroheme from sirohydrochlorin: step 1/1.</text>
</comment>
<comment type="pathway">
    <text evidence="1">Porphyrin-containing compound metabolism; siroheme biosynthesis; sirohydrochlorin from precorrin-2: step 1/1.</text>
</comment>
<comment type="similarity">
    <text evidence="1">In the N-terminal section; belongs to the precorrin-2 dehydrogenase / sirohydrochlorin ferrochelatase family.</text>
</comment>
<comment type="similarity">
    <text evidence="1">In the C-terminal section; belongs to the precorrin methyltransferase family.</text>
</comment>
<sequence length="457" mass="50041">MDHLPIFCQLRDRDCLIVGGGDVAERKARLLLDAGARLTVNALAFIPQFTAWADAGMLTLVEGPFDESLLDTCWLAIAATDDDTLNQRVSEAAEARRIFCNVVDAPKAASFIMPSIIDRSPLMVAVSSGGTSPVLARLLREKLESLLPLHLGQVAKYAGQLRGRVKQQFTTMSERRRFWEKLFVNDRLAQSLANNDQKAITETTEQLINEPLDHRGEVVLVGAGPGDAGLLTLKGLQQIQQADVVVYDRLVSDDIMNLVRRDADRVFVGKRAGYHCVPQEEINQILLREAQKGKRVVRLKGGDPFIFGRGGEELETLCNAGIPFSVVPGITAASGCSAYSGIPLTHRDYAQSVRLITGHLKTGGELDWENLAAEKQTLVFYMGLNQAATIQQKLIEHGMPGEMPVAIVENGTAVTQRVIDGTLTQLGELAQQMNSPSLIIIGRVVGLRDKLNWFSNH</sequence>
<protein>
    <recommendedName>
        <fullName evidence="1">Siroheme synthase</fullName>
    </recommendedName>
    <domain>
        <recommendedName>
            <fullName evidence="1">Uroporphyrinogen-III C-methyltransferase</fullName>
            <shortName evidence="1">Urogen III methylase</shortName>
            <ecNumber evidence="1">2.1.1.107</ecNumber>
        </recommendedName>
        <alternativeName>
            <fullName evidence="1">SUMT</fullName>
        </alternativeName>
        <alternativeName>
            <fullName evidence="1">Uroporphyrinogen III methylase</fullName>
            <shortName evidence="1">UROM</shortName>
        </alternativeName>
    </domain>
    <domain>
        <recommendedName>
            <fullName evidence="1">Precorrin-2 dehydrogenase</fullName>
            <ecNumber evidence="1">1.3.1.76</ecNumber>
        </recommendedName>
    </domain>
    <domain>
        <recommendedName>
            <fullName evidence="1">Sirohydrochlorin ferrochelatase</fullName>
            <ecNumber evidence="1">4.99.1.4</ecNumber>
        </recommendedName>
    </domain>
</protein>
<proteinExistence type="inferred from homology"/>
<feature type="chain" id="PRO_0000330559" description="Siroheme synthase">
    <location>
        <begin position="1"/>
        <end position="457"/>
    </location>
</feature>
<feature type="region of interest" description="Precorrin-2 dehydrogenase /sirohydrochlorin ferrochelatase" evidence="1">
    <location>
        <begin position="1"/>
        <end position="204"/>
    </location>
</feature>
<feature type="region of interest" description="Uroporphyrinogen-III C-methyltransferase" evidence="1">
    <location>
        <begin position="216"/>
        <end position="457"/>
    </location>
</feature>
<feature type="active site" description="Proton acceptor" evidence="1">
    <location>
        <position position="248"/>
    </location>
</feature>
<feature type="active site" description="Proton donor" evidence="1">
    <location>
        <position position="270"/>
    </location>
</feature>
<feature type="binding site" evidence="1">
    <location>
        <begin position="22"/>
        <end position="23"/>
    </location>
    <ligand>
        <name>NAD(+)</name>
        <dbReference type="ChEBI" id="CHEBI:57540"/>
    </ligand>
</feature>
<feature type="binding site" evidence="1">
    <location>
        <begin position="43"/>
        <end position="44"/>
    </location>
    <ligand>
        <name>NAD(+)</name>
        <dbReference type="ChEBI" id="CHEBI:57540"/>
    </ligand>
</feature>
<feature type="binding site" evidence="1">
    <location>
        <position position="225"/>
    </location>
    <ligand>
        <name>S-adenosyl-L-methionine</name>
        <dbReference type="ChEBI" id="CHEBI:59789"/>
    </ligand>
</feature>
<feature type="binding site" evidence="1">
    <location>
        <begin position="301"/>
        <end position="303"/>
    </location>
    <ligand>
        <name>S-adenosyl-L-methionine</name>
        <dbReference type="ChEBI" id="CHEBI:59789"/>
    </ligand>
</feature>
<feature type="binding site" evidence="1">
    <location>
        <position position="306"/>
    </location>
    <ligand>
        <name>S-adenosyl-L-methionine</name>
        <dbReference type="ChEBI" id="CHEBI:59789"/>
    </ligand>
</feature>
<feature type="binding site" evidence="1">
    <location>
        <begin position="331"/>
        <end position="332"/>
    </location>
    <ligand>
        <name>S-adenosyl-L-methionine</name>
        <dbReference type="ChEBI" id="CHEBI:59789"/>
    </ligand>
</feature>
<feature type="binding site" evidence="1">
    <location>
        <position position="382"/>
    </location>
    <ligand>
        <name>S-adenosyl-L-methionine</name>
        <dbReference type="ChEBI" id="CHEBI:59789"/>
    </ligand>
</feature>
<feature type="binding site" evidence="1">
    <location>
        <position position="411"/>
    </location>
    <ligand>
        <name>S-adenosyl-L-methionine</name>
        <dbReference type="ChEBI" id="CHEBI:59789"/>
    </ligand>
</feature>
<feature type="modified residue" description="Phosphoserine" evidence="1">
    <location>
        <position position="128"/>
    </location>
</feature>
<organism>
    <name type="scientific">Shigella boydii serotype 4 (strain Sb227)</name>
    <dbReference type="NCBI Taxonomy" id="300268"/>
    <lineage>
        <taxon>Bacteria</taxon>
        <taxon>Pseudomonadati</taxon>
        <taxon>Pseudomonadota</taxon>
        <taxon>Gammaproteobacteria</taxon>
        <taxon>Enterobacterales</taxon>
        <taxon>Enterobacteriaceae</taxon>
        <taxon>Shigella</taxon>
    </lineage>
</organism>
<dbReference type="EC" id="2.1.1.107" evidence="1"/>
<dbReference type="EC" id="1.3.1.76" evidence="1"/>
<dbReference type="EC" id="4.99.1.4" evidence="1"/>
<dbReference type="EMBL" id="CP000036">
    <property type="protein sequence ID" value="ABB67838.1"/>
    <property type="molecule type" value="Genomic_DNA"/>
</dbReference>
<dbReference type="RefSeq" id="WP_000349885.1">
    <property type="nucleotide sequence ID" value="NC_007613.1"/>
</dbReference>
<dbReference type="SMR" id="Q31VS0"/>
<dbReference type="KEGG" id="sbo:SBO_3350"/>
<dbReference type="HOGENOM" id="CLU_011276_2_0_6"/>
<dbReference type="UniPathway" id="UPA00148">
    <property type="reaction ID" value="UER00211"/>
</dbReference>
<dbReference type="UniPathway" id="UPA00148">
    <property type="reaction ID" value="UER00222"/>
</dbReference>
<dbReference type="UniPathway" id="UPA00262">
    <property type="reaction ID" value="UER00211"/>
</dbReference>
<dbReference type="UniPathway" id="UPA00262">
    <property type="reaction ID" value="UER00222"/>
</dbReference>
<dbReference type="UniPathway" id="UPA00262">
    <property type="reaction ID" value="UER00376"/>
</dbReference>
<dbReference type="Proteomes" id="UP000007067">
    <property type="component" value="Chromosome"/>
</dbReference>
<dbReference type="GO" id="GO:0051287">
    <property type="term" value="F:NAD binding"/>
    <property type="evidence" value="ECO:0007669"/>
    <property type="project" value="InterPro"/>
</dbReference>
<dbReference type="GO" id="GO:0043115">
    <property type="term" value="F:precorrin-2 dehydrogenase activity"/>
    <property type="evidence" value="ECO:0007669"/>
    <property type="project" value="UniProtKB-UniRule"/>
</dbReference>
<dbReference type="GO" id="GO:0051266">
    <property type="term" value="F:sirohydrochlorin ferrochelatase activity"/>
    <property type="evidence" value="ECO:0007669"/>
    <property type="project" value="UniProtKB-EC"/>
</dbReference>
<dbReference type="GO" id="GO:0004851">
    <property type="term" value="F:uroporphyrin-III C-methyltransferase activity"/>
    <property type="evidence" value="ECO:0007669"/>
    <property type="project" value="UniProtKB-UniRule"/>
</dbReference>
<dbReference type="GO" id="GO:0009236">
    <property type="term" value="P:cobalamin biosynthetic process"/>
    <property type="evidence" value="ECO:0007669"/>
    <property type="project" value="UniProtKB-UniRule"/>
</dbReference>
<dbReference type="GO" id="GO:0032259">
    <property type="term" value="P:methylation"/>
    <property type="evidence" value="ECO:0007669"/>
    <property type="project" value="UniProtKB-KW"/>
</dbReference>
<dbReference type="GO" id="GO:0019354">
    <property type="term" value="P:siroheme biosynthetic process"/>
    <property type="evidence" value="ECO:0007669"/>
    <property type="project" value="UniProtKB-UniRule"/>
</dbReference>
<dbReference type="CDD" id="cd11642">
    <property type="entry name" value="SUMT"/>
    <property type="match status" value="1"/>
</dbReference>
<dbReference type="FunFam" id="1.10.8.210:FF:000001">
    <property type="entry name" value="Siroheme synthase"/>
    <property type="match status" value="1"/>
</dbReference>
<dbReference type="FunFam" id="3.30.160.110:FF:000001">
    <property type="entry name" value="Siroheme synthase"/>
    <property type="match status" value="1"/>
</dbReference>
<dbReference type="FunFam" id="3.30.950.10:FF:000001">
    <property type="entry name" value="Siroheme synthase"/>
    <property type="match status" value="1"/>
</dbReference>
<dbReference type="FunFam" id="3.40.1010.10:FF:000001">
    <property type="entry name" value="Siroheme synthase"/>
    <property type="match status" value="1"/>
</dbReference>
<dbReference type="FunFam" id="3.40.50.720:FF:000092">
    <property type="entry name" value="Siroheme synthase"/>
    <property type="match status" value="1"/>
</dbReference>
<dbReference type="Gene3D" id="3.40.1010.10">
    <property type="entry name" value="Cobalt-precorrin-4 Transmethylase, Domain 1"/>
    <property type="match status" value="1"/>
</dbReference>
<dbReference type="Gene3D" id="3.30.950.10">
    <property type="entry name" value="Methyltransferase, Cobalt-precorrin-4 Transmethylase, Domain 2"/>
    <property type="match status" value="1"/>
</dbReference>
<dbReference type="Gene3D" id="3.40.50.720">
    <property type="entry name" value="NAD(P)-binding Rossmann-like Domain"/>
    <property type="match status" value="1"/>
</dbReference>
<dbReference type="Gene3D" id="1.10.8.210">
    <property type="entry name" value="Sirohaem synthase, dimerisation domain"/>
    <property type="match status" value="1"/>
</dbReference>
<dbReference type="Gene3D" id="3.30.160.110">
    <property type="entry name" value="Siroheme synthase, domain 2"/>
    <property type="match status" value="1"/>
</dbReference>
<dbReference type="HAMAP" id="MF_01646">
    <property type="entry name" value="Siroheme_synth"/>
    <property type="match status" value="1"/>
</dbReference>
<dbReference type="InterPro" id="IPR000878">
    <property type="entry name" value="4pyrrol_Mease"/>
</dbReference>
<dbReference type="InterPro" id="IPR035996">
    <property type="entry name" value="4pyrrol_Methylase_sf"/>
</dbReference>
<dbReference type="InterPro" id="IPR014777">
    <property type="entry name" value="4pyrrole_Mease_sub1"/>
</dbReference>
<dbReference type="InterPro" id="IPR014776">
    <property type="entry name" value="4pyrrole_Mease_sub2"/>
</dbReference>
<dbReference type="InterPro" id="IPR006366">
    <property type="entry name" value="CobA/CysG_C"/>
</dbReference>
<dbReference type="InterPro" id="IPR036291">
    <property type="entry name" value="NAD(P)-bd_dom_sf"/>
</dbReference>
<dbReference type="InterPro" id="IPR050161">
    <property type="entry name" value="Siro_Cobalamin_biosynth"/>
</dbReference>
<dbReference type="InterPro" id="IPR037115">
    <property type="entry name" value="Sirohaem_synt_dimer_dom_sf"/>
</dbReference>
<dbReference type="InterPro" id="IPR012409">
    <property type="entry name" value="Sirohaem_synth"/>
</dbReference>
<dbReference type="InterPro" id="IPR028281">
    <property type="entry name" value="Sirohaem_synthase_central"/>
</dbReference>
<dbReference type="InterPro" id="IPR019478">
    <property type="entry name" value="Sirohaem_synthase_dimer_dom"/>
</dbReference>
<dbReference type="InterPro" id="IPR006367">
    <property type="entry name" value="Sirohaem_synthase_N"/>
</dbReference>
<dbReference type="InterPro" id="IPR003043">
    <property type="entry name" value="Uropor_MeTrfase_CS"/>
</dbReference>
<dbReference type="NCBIfam" id="TIGR01469">
    <property type="entry name" value="cobA_cysG_Cterm"/>
    <property type="match status" value="1"/>
</dbReference>
<dbReference type="NCBIfam" id="TIGR01470">
    <property type="entry name" value="cysG_Nterm"/>
    <property type="match status" value="1"/>
</dbReference>
<dbReference type="NCBIfam" id="NF004790">
    <property type="entry name" value="PRK06136.1"/>
    <property type="match status" value="1"/>
</dbReference>
<dbReference type="NCBIfam" id="NF007922">
    <property type="entry name" value="PRK10637.1"/>
    <property type="match status" value="1"/>
</dbReference>
<dbReference type="PANTHER" id="PTHR45790:SF1">
    <property type="entry name" value="SIROHEME SYNTHASE"/>
    <property type="match status" value="1"/>
</dbReference>
<dbReference type="PANTHER" id="PTHR45790">
    <property type="entry name" value="SIROHEME SYNTHASE-RELATED"/>
    <property type="match status" value="1"/>
</dbReference>
<dbReference type="Pfam" id="PF10414">
    <property type="entry name" value="CysG_dimeriser"/>
    <property type="match status" value="1"/>
</dbReference>
<dbReference type="Pfam" id="PF13241">
    <property type="entry name" value="NAD_binding_7"/>
    <property type="match status" value="1"/>
</dbReference>
<dbReference type="Pfam" id="PF14824">
    <property type="entry name" value="Sirohm_synth_M"/>
    <property type="match status" value="1"/>
</dbReference>
<dbReference type="Pfam" id="PF00590">
    <property type="entry name" value="TP_methylase"/>
    <property type="match status" value="1"/>
</dbReference>
<dbReference type="PIRSF" id="PIRSF036426">
    <property type="entry name" value="Sirohaem_synth"/>
    <property type="match status" value="1"/>
</dbReference>
<dbReference type="SUPFAM" id="SSF51735">
    <property type="entry name" value="NAD(P)-binding Rossmann-fold domains"/>
    <property type="match status" value="1"/>
</dbReference>
<dbReference type="SUPFAM" id="SSF75615">
    <property type="entry name" value="Siroheme synthase middle domains-like"/>
    <property type="match status" value="1"/>
</dbReference>
<dbReference type="SUPFAM" id="SSF53790">
    <property type="entry name" value="Tetrapyrrole methylase"/>
    <property type="match status" value="1"/>
</dbReference>
<dbReference type="PROSITE" id="PS00839">
    <property type="entry name" value="SUMT_1"/>
    <property type="match status" value="1"/>
</dbReference>
<dbReference type="PROSITE" id="PS00840">
    <property type="entry name" value="SUMT_2"/>
    <property type="match status" value="1"/>
</dbReference>
<gene>
    <name evidence="1" type="primary">cysG</name>
    <name type="ordered locus">SBO_3350</name>
</gene>